<keyword id="KW-0520">NAD</keyword>
<keyword id="KW-0560">Oxidoreductase</keyword>
<keyword id="KW-0597">Phosphoprotein</keyword>
<keyword id="KW-0816">Tricarboxylic acid cycle</keyword>
<comment type="function">
    <text evidence="1">Catalyzes the reversible oxidation of malate to oxaloacetate.</text>
</comment>
<comment type="catalytic activity">
    <reaction evidence="1">
        <text>(S)-malate + NAD(+) = oxaloacetate + NADH + H(+)</text>
        <dbReference type="Rhea" id="RHEA:21432"/>
        <dbReference type="ChEBI" id="CHEBI:15378"/>
        <dbReference type="ChEBI" id="CHEBI:15589"/>
        <dbReference type="ChEBI" id="CHEBI:16452"/>
        <dbReference type="ChEBI" id="CHEBI:57540"/>
        <dbReference type="ChEBI" id="CHEBI:57945"/>
        <dbReference type="EC" id="1.1.1.37"/>
    </reaction>
</comment>
<comment type="subunit">
    <text>Homotetramer.</text>
</comment>
<comment type="similarity">
    <text evidence="1">Belongs to the LDH/MDH superfamily. MDH type 3 family.</text>
</comment>
<accession>Q59202</accession>
<name>MDH_BACIS</name>
<sequence>MAIKRKKISVIGAGFTGATTAFLLAKKELGDVVLVDIPQAENPTKGKALDMLESSPVLGFDANIIGTSNYEETADSDIVVITAGIARKPGMSRDDLVQTNQKVMKSVTKEVVKYSPNSIIIVLTNPVDAMTYTVYKESGFPKHRVIGQSGVLDTARFRTFVAQELNLSVKDITGFVLGGHGDDMVPLVRYSYAGGIPLEKLIPKERLEAIVERTRKGGGEIVNLLGNGSAYYAPAASLVEMVEAIVKDQRRVLPAIAYLEGEYGFEGIYLGVPTILGGNGLEQIIELELTDEEKAALEKSAESVRNVMKALI</sequence>
<proteinExistence type="inferred from homology"/>
<feature type="chain" id="PRO_0000113431" description="Malate dehydrogenase">
    <location>
        <begin position="1"/>
        <end position="312"/>
    </location>
</feature>
<feature type="active site" description="Proton acceptor" evidence="1">
    <location>
        <position position="180"/>
    </location>
</feature>
<feature type="binding site" evidence="1">
    <location>
        <begin position="12"/>
        <end position="17"/>
    </location>
    <ligand>
        <name>NAD(+)</name>
        <dbReference type="ChEBI" id="CHEBI:57540"/>
    </ligand>
</feature>
<feature type="binding site" evidence="1">
    <location>
        <position position="36"/>
    </location>
    <ligand>
        <name>NAD(+)</name>
        <dbReference type="ChEBI" id="CHEBI:57540"/>
    </ligand>
</feature>
<feature type="binding site" evidence="1">
    <location>
        <position position="87"/>
    </location>
    <ligand>
        <name>substrate</name>
    </ligand>
</feature>
<feature type="binding site" evidence="1">
    <location>
        <position position="93"/>
    </location>
    <ligand>
        <name>substrate</name>
    </ligand>
</feature>
<feature type="binding site" evidence="1">
    <location>
        <position position="100"/>
    </location>
    <ligand>
        <name>NAD(+)</name>
        <dbReference type="ChEBI" id="CHEBI:57540"/>
    </ligand>
</feature>
<feature type="binding site" evidence="1">
    <location>
        <begin position="123"/>
        <end position="125"/>
    </location>
    <ligand>
        <name>NAD(+)</name>
        <dbReference type="ChEBI" id="CHEBI:57540"/>
    </ligand>
</feature>
<feature type="binding site" evidence="1">
    <location>
        <position position="125"/>
    </location>
    <ligand>
        <name>substrate</name>
    </ligand>
</feature>
<feature type="binding site" evidence="1">
    <location>
        <position position="156"/>
    </location>
    <ligand>
        <name>substrate</name>
    </ligand>
</feature>
<feature type="modified residue" description="Phosphoserine" evidence="1">
    <location>
        <position position="149"/>
    </location>
</feature>
<protein>
    <recommendedName>
        <fullName evidence="1">Malate dehydrogenase</fullName>
        <ecNumber evidence="1">1.1.1.37</ecNumber>
    </recommendedName>
</protein>
<gene>
    <name evidence="1" type="primary">mdh</name>
</gene>
<evidence type="ECO:0000255" key="1">
    <source>
        <dbReference type="HAMAP-Rule" id="MF_00487"/>
    </source>
</evidence>
<dbReference type="EC" id="1.1.1.37" evidence="1"/>
<dbReference type="EMBL" id="X90527">
    <property type="protein sequence ID" value="CAA62129.1"/>
    <property type="molecule type" value="Genomic_DNA"/>
</dbReference>
<dbReference type="PIR" id="S61213">
    <property type="entry name" value="S61213"/>
</dbReference>
<dbReference type="SMR" id="Q59202"/>
<dbReference type="GO" id="GO:0004459">
    <property type="term" value="F:L-lactate dehydrogenase activity"/>
    <property type="evidence" value="ECO:0007669"/>
    <property type="project" value="TreeGrafter"/>
</dbReference>
<dbReference type="GO" id="GO:0030060">
    <property type="term" value="F:L-malate dehydrogenase (NAD+) activity"/>
    <property type="evidence" value="ECO:0007669"/>
    <property type="project" value="UniProtKB-UniRule"/>
</dbReference>
<dbReference type="GO" id="GO:0006089">
    <property type="term" value="P:lactate metabolic process"/>
    <property type="evidence" value="ECO:0007669"/>
    <property type="project" value="TreeGrafter"/>
</dbReference>
<dbReference type="GO" id="GO:0006099">
    <property type="term" value="P:tricarboxylic acid cycle"/>
    <property type="evidence" value="ECO:0007669"/>
    <property type="project" value="UniProtKB-UniRule"/>
</dbReference>
<dbReference type="CDD" id="cd01339">
    <property type="entry name" value="LDH-like_MDH"/>
    <property type="match status" value="1"/>
</dbReference>
<dbReference type="FunFam" id="3.40.50.720:FF:000018">
    <property type="entry name" value="Malate dehydrogenase"/>
    <property type="match status" value="1"/>
</dbReference>
<dbReference type="FunFam" id="3.90.110.10:FF:000004">
    <property type="entry name" value="Malate dehydrogenase"/>
    <property type="match status" value="1"/>
</dbReference>
<dbReference type="Gene3D" id="3.90.110.10">
    <property type="entry name" value="Lactate dehydrogenase/glycoside hydrolase, family 4, C-terminal"/>
    <property type="match status" value="1"/>
</dbReference>
<dbReference type="Gene3D" id="3.40.50.720">
    <property type="entry name" value="NAD(P)-binding Rossmann-like Domain"/>
    <property type="match status" value="1"/>
</dbReference>
<dbReference type="HAMAP" id="MF_00487">
    <property type="entry name" value="Malate_dehydrog_3"/>
    <property type="match status" value="1"/>
</dbReference>
<dbReference type="InterPro" id="IPR001557">
    <property type="entry name" value="L-lactate/malate_DH"/>
</dbReference>
<dbReference type="InterPro" id="IPR022383">
    <property type="entry name" value="Lactate/malate_DH_C"/>
</dbReference>
<dbReference type="InterPro" id="IPR001236">
    <property type="entry name" value="Lactate/malate_DH_N"/>
</dbReference>
<dbReference type="InterPro" id="IPR015955">
    <property type="entry name" value="Lactate_DH/Glyco_Ohase_4_C"/>
</dbReference>
<dbReference type="InterPro" id="IPR011275">
    <property type="entry name" value="Malate_DH_type3"/>
</dbReference>
<dbReference type="InterPro" id="IPR036291">
    <property type="entry name" value="NAD(P)-bd_dom_sf"/>
</dbReference>
<dbReference type="NCBIfam" id="TIGR01763">
    <property type="entry name" value="MalateDH_bact"/>
    <property type="match status" value="1"/>
</dbReference>
<dbReference type="NCBIfam" id="NF004863">
    <property type="entry name" value="PRK06223.1"/>
    <property type="match status" value="1"/>
</dbReference>
<dbReference type="PANTHER" id="PTHR43128">
    <property type="entry name" value="L-2-HYDROXYCARBOXYLATE DEHYDROGENASE (NAD(P)(+))"/>
    <property type="match status" value="1"/>
</dbReference>
<dbReference type="PANTHER" id="PTHR43128:SF16">
    <property type="entry name" value="L-LACTATE DEHYDROGENASE"/>
    <property type="match status" value="1"/>
</dbReference>
<dbReference type="Pfam" id="PF02866">
    <property type="entry name" value="Ldh_1_C"/>
    <property type="match status" value="1"/>
</dbReference>
<dbReference type="Pfam" id="PF00056">
    <property type="entry name" value="Ldh_1_N"/>
    <property type="match status" value="1"/>
</dbReference>
<dbReference type="PIRSF" id="PIRSF000102">
    <property type="entry name" value="Lac_mal_DH"/>
    <property type="match status" value="1"/>
</dbReference>
<dbReference type="PRINTS" id="PR00086">
    <property type="entry name" value="LLDHDRGNASE"/>
</dbReference>
<dbReference type="SUPFAM" id="SSF56327">
    <property type="entry name" value="LDH C-terminal domain-like"/>
    <property type="match status" value="1"/>
</dbReference>
<dbReference type="SUPFAM" id="SSF51735">
    <property type="entry name" value="NAD(P)-binding Rossmann-fold domains"/>
    <property type="match status" value="1"/>
</dbReference>
<organism>
    <name type="scientific">Bacillus israeli</name>
    <dbReference type="NCBI Taxonomy" id="42189"/>
    <lineage>
        <taxon>Bacteria</taxon>
        <taxon>Bacillati</taxon>
        <taxon>Bacillota</taxon>
        <taxon>Bacilli</taxon>
        <taxon>Bacillales</taxon>
        <taxon>Bacillaceae</taxon>
        <taxon>Bacillus</taxon>
    </lineage>
</organism>
<reference key="1">
    <citation type="journal article" date="1996" name="Biochem. J.">
        <title>Tetrameric malate dehydrogenase from a thermophilic Bacillus: cloning, sequence and overexpression of the gene encoding the enzyme and isolation and characterization of the recombinant enzyme.</title>
        <authorList>
            <person name="Wynne S.A."/>
            <person name="Nicholls D.J."/>
            <person name="Scawen M.D."/>
            <person name="Sundaram T.K."/>
        </authorList>
    </citation>
    <scope>NUCLEOTIDE SEQUENCE [GENOMIC DNA]</scope>
</reference>